<dbReference type="EMBL" id="X06707">
    <property type="protein sequence ID" value="CAA29890.1"/>
    <property type="molecule type" value="Genomic_DNA"/>
</dbReference>
<dbReference type="EMBL" id="J03321">
    <property type="protein sequence ID" value="AAA91567.1"/>
    <property type="molecule type" value="Genomic_DNA"/>
</dbReference>
<dbReference type="EMBL" id="M19487">
    <property type="protein sequence ID" value="AAB02592.1"/>
    <property type="status" value="ALT_INIT"/>
    <property type="molecule type" value="Genomic_DNA"/>
</dbReference>
<dbReference type="EMBL" id="M19487">
    <property type="protein sequence ID" value="AAB02584.1"/>
    <property type="status" value="ALT_FRAME"/>
    <property type="molecule type" value="Genomic_DNA"/>
</dbReference>
<dbReference type="PIR" id="S01875">
    <property type="entry name" value="S01875"/>
</dbReference>
<dbReference type="RefSeq" id="NP_040380.1">
    <property type="nucleotide sequence ID" value="NC_001372.1"/>
</dbReference>
<dbReference type="RefSeq" id="WP_010889882.1">
    <property type="nucleotide sequence ID" value="NZ_CVNT01000004.1"/>
</dbReference>
<dbReference type="RefSeq" id="WP_012209813.1">
    <property type="nucleotide sequence ID" value="NZ_CVNC01000027.1"/>
</dbReference>
<dbReference type="RefSeq" id="YP_001569034.1">
    <property type="nucleotide sequence ID" value="NC_010029.2"/>
</dbReference>
<dbReference type="RefSeq" id="YP_001654086.1">
    <property type="nucleotide sequence ID" value="NC_010286.1"/>
</dbReference>
<dbReference type="RefSeq" id="YP_002842022.1">
    <property type="nucleotide sequence ID" value="NC_012625.1"/>
</dbReference>
<dbReference type="RefSeq" id="YP_002842030.1">
    <property type="nucleotide sequence ID" value="NC_012626.1"/>
</dbReference>
<dbReference type="RefSeq" id="YP_002842067.1">
    <property type="nucleotide sequence ID" value="NC_012631.1"/>
</dbReference>
<dbReference type="SMR" id="P0CE19"/>
<dbReference type="GO" id="GO:0003677">
    <property type="term" value="F:DNA binding"/>
    <property type="evidence" value="ECO:0007669"/>
    <property type="project" value="UniProtKB-KW"/>
</dbReference>
<dbReference type="GO" id="GO:0015074">
    <property type="term" value="P:DNA integration"/>
    <property type="evidence" value="ECO:0007669"/>
    <property type="project" value="UniProtKB-KW"/>
</dbReference>
<dbReference type="GO" id="GO:0006310">
    <property type="term" value="P:DNA recombination"/>
    <property type="evidence" value="ECO:0007669"/>
    <property type="project" value="UniProtKB-KW"/>
</dbReference>
<dbReference type="GO" id="GO:0075713">
    <property type="term" value="P:establishment of integrated proviral latency"/>
    <property type="evidence" value="ECO:0007669"/>
    <property type="project" value="UniProtKB-KW"/>
</dbReference>
<dbReference type="GO" id="GO:0046718">
    <property type="term" value="P:symbiont entry into host cell"/>
    <property type="evidence" value="ECO:0007669"/>
    <property type="project" value="UniProtKB-KW"/>
</dbReference>
<dbReference type="GO" id="GO:0044826">
    <property type="term" value="P:viral genome integration into host DNA"/>
    <property type="evidence" value="ECO:0007669"/>
    <property type="project" value="UniProtKB-KW"/>
</dbReference>
<dbReference type="CDD" id="cd00397">
    <property type="entry name" value="DNA_BRE_C"/>
    <property type="match status" value="1"/>
</dbReference>
<dbReference type="Gene3D" id="1.10.443.10">
    <property type="entry name" value="Intergrase catalytic core"/>
    <property type="match status" value="1"/>
</dbReference>
<dbReference type="InterPro" id="IPR044068">
    <property type="entry name" value="CB"/>
</dbReference>
<dbReference type="InterPro" id="IPR011010">
    <property type="entry name" value="DNA_brk_join_enz"/>
</dbReference>
<dbReference type="InterPro" id="IPR013762">
    <property type="entry name" value="Integrase-like_cat_sf"/>
</dbReference>
<dbReference type="InterPro" id="IPR002104">
    <property type="entry name" value="Integrase_catalytic"/>
</dbReference>
<dbReference type="Pfam" id="PF00589">
    <property type="entry name" value="Phage_integrase"/>
    <property type="match status" value="1"/>
</dbReference>
<dbReference type="SUPFAM" id="SSF56349">
    <property type="entry name" value="DNA breaking-rejoining enzymes"/>
    <property type="match status" value="1"/>
</dbReference>
<dbReference type="PROSITE" id="PS51900">
    <property type="entry name" value="CB"/>
    <property type="match status" value="1"/>
</dbReference>
<dbReference type="PROSITE" id="PS51898">
    <property type="entry name" value="TYR_RECOMBINASE"/>
    <property type="match status" value="1"/>
</dbReference>
<evidence type="ECO:0000255" key="1">
    <source>
        <dbReference type="PROSITE-ProRule" id="PRU01246"/>
    </source>
</evidence>
<evidence type="ECO:0000255" key="2">
    <source>
        <dbReference type="PROSITE-ProRule" id="PRU01248"/>
    </source>
</evidence>
<evidence type="ECO:0000305" key="3"/>
<comment type="miscellaneous">
    <text>pGP7-D is required for growth within mammalian cells.</text>
</comment>
<comment type="similarity">
    <text evidence="3">Belongs to the 'phage' integrase family.</text>
</comment>
<comment type="sequence caution" evidence="3">
    <conflict type="frameshift">
        <sequence resource="EMBL-CDS" id="AAB02584"/>
    </conflict>
</comment>
<comment type="sequence caution" evidence="3">
    <conflict type="erroneous initiation">
        <sequence resource="EMBL-CDS" id="AAB02592"/>
    </conflict>
</comment>
<protein>
    <recommendedName>
        <fullName>Virulence plasmid integrase pGP7-D</fullName>
    </recommendedName>
    <alternativeName>
        <fullName>Protein P-11</fullName>
    </alternativeName>
</protein>
<name>GP7D_CHLTH</name>
<reference key="1">
    <citation type="journal article" date="1988" name="Nucleic Acids Res.">
        <title>Analysis of the entire nucleotide sequence of the cryptic plasmid of Chlamydia trachomatis serovar L1. Evidence for involvement in DNA replication.</title>
        <authorList>
            <person name="Hatt C."/>
            <person name="Ward M.E."/>
            <person name="Clarke I.N."/>
        </authorList>
    </citation>
    <scope>NUCLEOTIDE SEQUENCE [GENOMIC DNA]</scope>
    <source>
        <strain>L1/440/LN</strain>
        <plasmid>pLGV440</plasmid>
    </source>
</reference>
<reference key="2">
    <citation type="submission" date="1994-04" db="EMBL/GenBank/DDBJ databases">
        <authorList>
            <person name="Hatt C."/>
        </authorList>
    </citation>
    <scope>SEQUENCE REVISION</scope>
</reference>
<reference key="3">
    <citation type="journal article" date="1990" name="Plasmid">
        <title>Diversity of the Chlamydia trachomatis common plasmid in biovars with different pathogenicity.</title>
        <authorList>
            <person name="Comanducci M."/>
            <person name="Ricci S."/>
            <person name="Cevenini R."/>
            <person name="Ratti G."/>
        </authorList>
    </citation>
    <scope>NUCLEOTIDE SEQUENCE [GENOMIC DNA]</scope>
    <source>
        <strain>D/GO/86</strain>
        <plasmid>pCHL1</plasmid>
    </source>
</reference>
<reference key="4">
    <citation type="journal article" date="1987" name="Plasmid">
        <title>Characterization and sequence of a plasmid from the trachoma biovar of Chlamydia trachomatis.</title>
        <authorList>
            <person name="Sriprakash K.S."/>
            <person name="Macavoy E.S."/>
        </authorList>
    </citation>
    <scope>NUCLEOTIDE SEQUENCE [GENOMIC DNA]</scope>
    <source>
        <strain>Serotype B</strain>
        <plasmid>pCTT1</plasmid>
    </source>
</reference>
<reference key="5">
    <citation type="journal article" date="1993" name="Mol. Gen. Genet.">
        <title>Transcriptional analysis of the Chlamydia trachomatis plasmid pCT identifies temporally regulated transcripts, anti-sense RNA and sigma 70-selected promoters.</title>
        <authorList>
            <person name="Ricci S."/>
            <person name="Cevenini R."/>
            <person name="Cosco E."/>
            <person name="Comanducci M."/>
            <person name="Ratti G."/>
            <person name="Scarlato V."/>
        </authorList>
    </citation>
    <scope>NUCLEOTIDE SEQUENCE [GENOMIC DNA]</scope>
    <source>
        <plasmid>pCHL1</plasmid>
    </source>
</reference>
<accession>P0CE19</accession>
<accession>P10561</accession>
<accession>Q46427</accession>
<feature type="chain" id="PRO_0000197563" description="Virulence plasmid integrase pGP7-D">
    <location>
        <begin position="1"/>
        <end position="305"/>
    </location>
</feature>
<feature type="domain" description="Core-binding (CB)" evidence="2">
    <location>
        <begin position="13"/>
        <end position="99"/>
    </location>
</feature>
<feature type="domain" description="Tyr recombinase" evidence="1">
    <location>
        <begin position="127"/>
        <end position="305"/>
    </location>
</feature>
<feature type="active site" evidence="1">
    <location>
        <position position="188"/>
    </location>
</feature>
<feature type="active site" evidence="1">
    <location>
        <position position="257"/>
    </location>
</feature>
<feature type="active site" description="O-(3'-phospho-DNA)-tyrosine intermediate" evidence="1">
    <location>
        <position position="289"/>
    </location>
</feature>
<feature type="sequence variant" description="In plasmid pCHL1.">
    <original>H</original>
    <variation>Y</variation>
    <location>
        <position position="28"/>
    </location>
</feature>
<feature type="sequence variant" description="In plasmid pCHL1 and plasmid pCTT1.">
    <original>Y</original>
    <variation>H</variation>
    <location>
        <position position="244"/>
    </location>
</feature>
<feature type="sequence variant" description="In plasmid pCHL1.">
    <original>S</original>
    <variation>I</variation>
    <location>
        <position position="296"/>
    </location>
</feature>
<feature type="sequence variant" description="In plasmid pCHL1 and plasmid pCTT1.">
    <original>P</original>
    <variation>T</variation>
    <location>
        <position position="303"/>
    </location>
</feature>
<geneLocation type="plasmid">
    <name>pLGV440</name>
</geneLocation>
<geneLocation type="plasmid">
    <name>pCHL1</name>
</geneLocation>
<geneLocation type="plasmid">
    <name>pCTT1</name>
</geneLocation>
<proteinExistence type="inferred from homology"/>
<sequence length="305" mass="34806">MGSMAFHKSRLFLTFGDASEIWLSTLSHLTRKNYASGINFLVSLEILDLSETLIKAISLDHSESLFKIKSLDVFNGKVVSEASKQARAACYISFTKFLYRLTKGYIKPAIPLKDFGNTTFFKIRDKIKTESISKQEWTVFFEALRIVNYRDYLIGKLIVQGIRKLDEILSLRTDDLFFASNQISFRIKKRQNKETKILITFPISLMEELQKYTCGRNGRVFVSKIGIPVTTSQVAHNFRLAEFYSAMKIKITPRVLRASALIHLKQIGLKDEEIMRISCLSSRQSVCSYCSGEEVSPLVQTPPIL</sequence>
<keyword id="KW-0229">DNA integration</keyword>
<keyword id="KW-0233">DNA recombination</keyword>
<keyword id="KW-0238">DNA-binding</keyword>
<keyword id="KW-0614">Plasmid</keyword>
<keyword id="KW-1179">Viral genome integration</keyword>
<keyword id="KW-1160">Virus entry into host cell</keyword>
<organism>
    <name type="scientific">Chlamydia trachomatis</name>
    <dbReference type="NCBI Taxonomy" id="813"/>
    <lineage>
        <taxon>Bacteria</taxon>
        <taxon>Pseudomonadati</taxon>
        <taxon>Chlamydiota</taxon>
        <taxon>Chlamydiia</taxon>
        <taxon>Chlamydiales</taxon>
        <taxon>Chlamydiaceae</taxon>
        <taxon>Chlamydia/Chlamydophila group</taxon>
        <taxon>Chlamydia</taxon>
    </lineage>
</organism>